<accession>Q71XG3</accession>
<organism>
    <name type="scientific">Listeria monocytogenes serotype 4b (strain F2365)</name>
    <dbReference type="NCBI Taxonomy" id="265669"/>
    <lineage>
        <taxon>Bacteria</taxon>
        <taxon>Bacillati</taxon>
        <taxon>Bacillota</taxon>
        <taxon>Bacilli</taxon>
        <taxon>Bacillales</taxon>
        <taxon>Listeriaceae</taxon>
        <taxon>Listeria</taxon>
    </lineage>
</organism>
<gene>
    <name evidence="1" type="primary">fabH</name>
    <name type="ordered locus">LMOf2365_2235</name>
</gene>
<proteinExistence type="inferred from homology"/>
<keyword id="KW-0012">Acyltransferase</keyword>
<keyword id="KW-0963">Cytoplasm</keyword>
<keyword id="KW-0275">Fatty acid biosynthesis</keyword>
<keyword id="KW-0276">Fatty acid metabolism</keyword>
<keyword id="KW-0444">Lipid biosynthesis</keyword>
<keyword id="KW-0443">Lipid metabolism</keyword>
<keyword id="KW-0511">Multifunctional enzyme</keyword>
<keyword id="KW-0808">Transferase</keyword>
<evidence type="ECO:0000255" key="1">
    <source>
        <dbReference type="HAMAP-Rule" id="MF_01815"/>
    </source>
</evidence>
<protein>
    <recommendedName>
        <fullName evidence="1">Beta-ketoacyl-[acyl-carrier-protein] synthase III</fullName>
        <shortName evidence="1">Beta-ketoacyl-ACP synthase III</shortName>
        <shortName evidence="1">KAS III</shortName>
        <ecNumber evidence="1">2.3.1.180</ecNumber>
    </recommendedName>
    <alternativeName>
        <fullName evidence="1">3-oxoacyl-[acyl-carrier-protein] synthase 3</fullName>
    </alternativeName>
    <alternativeName>
        <fullName evidence="1">3-oxoacyl-[acyl-carrier-protein] synthase III</fullName>
    </alternativeName>
</protein>
<feature type="chain" id="PRO_0000110440" description="Beta-ketoacyl-[acyl-carrier-protein] synthase III">
    <location>
        <begin position="1"/>
        <end position="312"/>
    </location>
</feature>
<feature type="region of interest" description="ACP-binding" evidence="1">
    <location>
        <begin position="238"/>
        <end position="242"/>
    </location>
</feature>
<feature type="active site" evidence="1">
    <location>
        <position position="112"/>
    </location>
</feature>
<feature type="active site" evidence="1">
    <location>
        <position position="237"/>
    </location>
</feature>
<feature type="active site" evidence="1">
    <location>
        <position position="267"/>
    </location>
</feature>
<comment type="function">
    <text evidence="1">Catalyzes the condensation reaction of fatty acid synthesis by the addition to an acyl acceptor of two carbons from malonyl-ACP. Catalyzes the first condensation reaction which initiates fatty acid synthesis and may therefore play a role in governing the total rate of fatty acid production. Possesses both acetoacetyl-ACP synthase and acetyl transacylase activities. Its substrate specificity determines the biosynthesis of branched-chain and/or straight-chain of fatty acids.</text>
</comment>
<comment type="catalytic activity">
    <reaction evidence="1">
        <text>malonyl-[ACP] + acetyl-CoA + H(+) = 3-oxobutanoyl-[ACP] + CO2 + CoA</text>
        <dbReference type="Rhea" id="RHEA:12080"/>
        <dbReference type="Rhea" id="RHEA-COMP:9623"/>
        <dbReference type="Rhea" id="RHEA-COMP:9625"/>
        <dbReference type="ChEBI" id="CHEBI:15378"/>
        <dbReference type="ChEBI" id="CHEBI:16526"/>
        <dbReference type="ChEBI" id="CHEBI:57287"/>
        <dbReference type="ChEBI" id="CHEBI:57288"/>
        <dbReference type="ChEBI" id="CHEBI:78449"/>
        <dbReference type="ChEBI" id="CHEBI:78450"/>
        <dbReference type="EC" id="2.3.1.180"/>
    </reaction>
</comment>
<comment type="pathway">
    <text evidence="1">Lipid metabolism; fatty acid biosynthesis.</text>
</comment>
<comment type="subunit">
    <text evidence="1">Homodimer.</text>
</comment>
<comment type="subcellular location">
    <subcellularLocation>
        <location evidence="1">Cytoplasm</location>
    </subcellularLocation>
</comment>
<comment type="domain">
    <text evidence="1">The last Arg residue of the ACP-binding site is essential for the weak association between ACP/AcpP and FabH.</text>
</comment>
<comment type="similarity">
    <text evidence="1">Belongs to the thiolase-like superfamily. FabH family.</text>
</comment>
<reference key="1">
    <citation type="journal article" date="2004" name="Nucleic Acids Res.">
        <title>Whole genome comparisons of serotype 4b and 1/2a strains of the food-borne pathogen Listeria monocytogenes reveal new insights into the core genome components of this species.</title>
        <authorList>
            <person name="Nelson K.E."/>
            <person name="Fouts D.E."/>
            <person name="Mongodin E.F."/>
            <person name="Ravel J."/>
            <person name="DeBoy R.T."/>
            <person name="Kolonay J.F."/>
            <person name="Rasko D.A."/>
            <person name="Angiuoli S.V."/>
            <person name="Gill S.R."/>
            <person name="Paulsen I.T."/>
            <person name="Peterson J.D."/>
            <person name="White O."/>
            <person name="Nelson W.C."/>
            <person name="Nierman W.C."/>
            <person name="Beanan M.J."/>
            <person name="Brinkac L.M."/>
            <person name="Daugherty S.C."/>
            <person name="Dodson R.J."/>
            <person name="Durkin A.S."/>
            <person name="Madupu R."/>
            <person name="Haft D.H."/>
            <person name="Selengut J."/>
            <person name="Van Aken S.E."/>
            <person name="Khouri H.M."/>
            <person name="Fedorova N."/>
            <person name="Forberger H.A."/>
            <person name="Tran B."/>
            <person name="Kathariou S."/>
            <person name="Wonderling L.D."/>
            <person name="Uhlich G.A."/>
            <person name="Bayles D.O."/>
            <person name="Luchansky J.B."/>
            <person name="Fraser C.M."/>
        </authorList>
    </citation>
    <scope>NUCLEOTIDE SEQUENCE [LARGE SCALE GENOMIC DNA]</scope>
    <source>
        <strain>F2365</strain>
    </source>
</reference>
<dbReference type="EC" id="2.3.1.180" evidence="1"/>
<dbReference type="EMBL" id="AE017262">
    <property type="protein sequence ID" value="AAT05002.1"/>
    <property type="molecule type" value="Genomic_DNA"/>
</dbReference>
<dbReference type="RefSeq" id="WP_003722325.1">
    <property type="nucleotide sequence ID" value="NC_002973.6"/>
</dbReference>
<dbReference type="SMR" id="Q71XG3"/>
<dbReference type="KEGG" id="lmf:LMOf2365_2235"/>
<dbReference type="HOGENOM" id="CLU_039592_3_1_9"/>
<dbReference type="UniPathway" id="UPA00094"/>
<dbReference type="GO" id="GO:0005737">
    <property type="term" value="C:cytoplasm"/>
    <property type="evidence" value="ECO:0007669"/>
    <property type="project" value="UniProtKB-SubCell"/>
</dbReference>
<dbReference type="GO" id="GO:0004315">
    <property type="term" value="F:3-oxoacyl-[acyl-carrier-protein] synthase activity"/>
    <property type="evidence" value="ECO:0007669"/>
    <property type="project" value="InterPro"/>
</dbReference>
<dbReference type="GO" id="GO:0033818">
    <property type="term" value="F:beta-ketoacyl-acyl-carrier-protein synthase III activity"/>
    <property type="evidence" value="ECO:0007669"/>
    <property type="project" value="UniProtKB-UniRule"/>
</dbReference>
<dbReference type="GO" id="GO:0006633">
    <property type="term" value="P:fatty acid biosynthetic process"/>
    <property type="evidence" value="ECO:0007669"/>
    <property type="project" value="UniProtKB-UniRule"/>
</dbReference>
<dbReference type="CDD" id="cd00830">
    <property type="entry name" value="KAS_III"/>
    <property type="match status" value="1"/>
</dbReference>
<dbReference type="FunFam" id="3.40.47.10:FF:000004">
    <property type="entry name" value="3-oxoacyl-[acyl-carrier-protein] synthase 3"/>
    <property type="match status" value="1"/>
</dbReference>
<dbReference type="Gene3D" id="3.40.47.10">
    <property type="match status" value="1"/>
</dbReference>
<dbReference type="HAMAP" id="MF_01815">
    <property type="entry name" value="FabH"/>
    <property type="match status" value="1"/>
</dbReference>
<dbReference type="InterPro" id="IPR013747">
    <property type="entry name" value="ACP_syn_III_C"/>
</dbReference>
<dbReference type="InterPro" id="IPR013751">
    <property type="entry name" value="ACP_syn_III_N"/>
</dbReference>
<dbReference type="InterPro" id="IPR004655">
    <property type="entry name" value="FabH"/>
</dbReference>
<dbReference type="InterPro" id="IPR016039">
    <property type="entry name" value="Thiolase-like"/>
</dbReference>
<dbReference type="NCBIfam" id="TIGR00747">
    <property type="entry name" value="fabH"/>
    <property type="match status" value="1"/>
</dbReference>
<dbReference type="NCBIfam" id="NF006829">
    <property type="entry name" value="PRK09352.1"/>
    <property type="match status" value="1"/>
</dbReference>
<dbReference type="PANTHER" id="PTHR43091">
    <property type="entry name" value="3-OXOACYL-[ACYL-CARRIER-PROTEIN] SYNTHASE"/>
    <property type="match status" value="1"/>
</dbReference>
<dbReference type="PANTHER" id="PTHR43091:SF1">
    <property type="entry name" value="BETA-KETOACYL-[ACYL-CARRIER-PROTEIN] SYNTHASE III, CHLOROPLASTIC"/>
    <property type="match status" value="1"/>
</dbReference>
<dbReference type="Pfam" id="PF08545">
    <property type="entry name" value="ACP_syn_III"/>
    <property type="match status" value="1"/>
</dbReference>
<dbReference type="Pfam" id="PF08541">
    <property type="entry name" value="ACP_syn_III_C"/>
    <property type="match status" value="1"/>
</dbReference>
<dbReference type="SUPFAM" id="SSF53901">
    <property type="entry name" value="Thiolase-like"/>
    <property type="match status" value="1"/>
</dbReference>
<sequence length="312" mass="33971">MNAGILGVGKYVPEKIVTNFDLEKIMDTSDEWIRTRTGIEERRIARDDEYTHDLAYEAAKVAIKNAGLTPDDIDLFIVATVTQEATFPSVANIIQDRLGAKNAAGMDVEAACAGFTFGVVTAAQFIKTGAYKNIVVVGADKLSKITNWDDRTTAVLFGDGAGAVVMGPVSDDHGLLSFDLGSDGSGGKYLNLDENKKIYMNGREVFRFAVRQMGEASLRVLERAGLEKEDLDLLIPHQANIRIMEASRERLNLPEEKLMKTVHKYGNTSSSSIALALVDAVEEGRIKDNDNVLLVGFGGGLTWGALIIRWGK</sequence>
<name>FABH_LISMF</name>